<keyword id="KW-0472">Membrane</keyword>
<keyword id="KW-1185">Reference proteome</keyword>
<keyword id="KW-0812">Transmembrane</keyword>
<keyword id="KW-1133">Transmembrane helix</keyword>
<reference key="1">
    <citation type="journal article" date="2000" name="DNA Res.">
        <title>Structural analysis of Arabidopsis thaliana chromosome 3. I. Sequence features of the regions of 4,504,864 bp covered by sixty P1 and TAC clones.</title>
        <authorList>
            <person name="Sato S."/>
            <person name="Nakamura Y."/>
            <person name="Kaneko T."/>
            <person name="Katoh T."/>
            <person name="Asamizu E."/>
            <person name="Tabata S."/>
        </authorList>
    </citation>
    <scope>NUCLEOTIDE SEQUENCE [LARGE SCALE GENOMIC DNA]</scope>
    <source>
        <strain>cv. Columbia</strain>
    </source>
</reference>
<reference key="2">
    <citation type="journal article" date="2017" name="Plant J.">
        <title>Araport11: a complete reannotation of the Arabidopsis thaliana reference genome.</title>
        <authorList>
            <person name="Cheng C.Y."/>
            <person name="Krishnakumar V."/>
            <person name="Chan A.P."/>
            <person name="Thibaud-Nissen F."/>
            <person name="Schobel S."/>
            <person name="Town C.D."/>
        </authorList>
    </citation>
    <scope>GENOME REANNOTATION</scope>
    <source>
        <strain>cv. Columbia</strain>
    </source>
</reference>
<reference key="3">
    <citation type="journal article" date="2004" name="Plant Physiol.">
        <title>A novel family of cys-rich membrane proteins mediates cadmium resistance in Arabidopsis.</title>
        <authorList>
            <person name="Song W.Y."/>
            <person name="Martinoia E."/>
            <person name="Lee J."/>
            <person name="Kim D."/>
            <person name="Kim D.Y."/>
            <person name="Vogt E."/>
            <person name="Shim D."/>
            <person name="Choi K.S."/>
            <person name="Hwang I."/>
            <person name="Lee Y."/>
        </authorList>
    </citation>
    <scope>GENE FAMILY</scope>
    <scope>NOMENCLATURE</scope>
</reference>
<sequence>MGRPGSQPNEAQPPPVQVQPTVNRDNQVHSQNGAIGQANIQTGRPVNNQTQNLWSSDLFDCMNDSENAVITCLAPCVTLGQIAEIVDEGATPCATGGLLYGMIFFIGVPFVYSCMFRAKMRNKYGLPDAPAPDWITHLFCEHCALCQEYRELKHRGFDPNIGWAGNVQAQQPVMSPPTGQRMMG</sequence>
<name>PCR4_ARATH</name>
<accession>Q9LS44</accession>
<evidence type="ECO:0000250" key="1"/>
<evidence type="ECO:0000255" key="2"/>
<evidence type="ECO:0000256" key="3">
    <source>
        <dbReference type="SAM" id="MobiDB-lite"/>
    </source>
</evidence>
<evidence type="ECO:0000305" key="4"/>
<comment type="function">
    <text evidence="1">May be involved in heavy metals transport.</text>
</comment>
<comment type="subcellular location">
    <subcellularLocation>
        <location evidence="4">Membrane</location>
        <topology evidence="4">Single-pass membrane protein</topology>
    </subcellularLocation>
</comment>
<comment type="similarity">
    <text evidence="4">Belongs to the cornifelin family.</text>
</comment>
<feature type="chain" id="PRO_0000407720" description="Protein PLANT CADMIUM RESISTANCE 4">
    <location>
        <begin position="1"/>
        <end position="184"/>
    </location>
</feature>
<feature type="transmembrane region" description="Helical" evidence="2">
    <location>
        <begin position="96"/>
        <end position="116"/>
    </location>
</feature>
<feature type="region of interest" description="Disordered" evidence="3">
    <location>
        <begin position="1"/>
        <end position="21"/>
    </location>
</feature>
<feature type="compositionally biased region" description="Polar residues" evidence="3">
    <location>
        <begin position="1"/>
        <end position="10"/>
    </location>
</feature>
<gene>
    <name type="primary">PCR4</name>
    <name type="ordered locus">At3g18460</name>
    <name type="ORF">MYF24.18</name>
</gene>
<protein>
    <recommendedName>
        <fullName>Protein PLANT CADMIUM RESISTANCE 4</fullName>
        <shortName>AtPCR4</shortName>
    </recommendedName>
</protein>
<proteinExistence type="inferred from homology"/>
<dbReference type="EMBL" id="AB026658">
    <property type="protein sequence ID" value="BAB01112.1"/>
    <property type="molecule type" value="Genomic_DNA"/>
</dbReference>
<dbReference type="EMBL" id="CP002686">
    <property type="protein sequence ID" value="AEE76100.1"/>
    <property type="molecule type" value="Genomic_DNA"/>
</dbReference>
<dbReference type="RefSeq" id="NP_188475.1">
    <property type="nucleotide sequence ID" value="NM_112731.1"/>
</dbReference>
<dbReference type="FunCoup" id="Q9LS44">
    <property type="interactions" value="35"/>
</dbReference>
<dbReference type="STRING" id="3702.Q9LS44"/>
<dbReference type="PaxDb" id="3702-AT3G18460.1"/>
<dbReference type="EnsemblPlants" id="AT3G18460.1">
    <property type="protein sequence ID" value="AT3G18460.1"/>
    <property type="gene ID" value="AT3G18460"/>
</dbReference>
<dbReference type="GeneID" id="821375"/>
<dbReference type="Gramene" id="AT3G18460.1">
    <property type="protein sequence ID" value="AT3G18460.1"/>
    <property type="gene ID" value="AT3G18460"/>
</dbReference>
<dbReference type="KEGG" id="ath:AT3G18460"/>
<dbReference type="Araport" id="AT3G18460"/>
<dbReference type="TAIR" id="AT3G18460"/>
<dbReference type="eggNOG" id="ENOG502RXFT">
    <property type="taxonomic scope" value="Eukaryota"/>
</dbReference>
<dbReference type="HOGENOM" id="CLU_083147_1_1_1"/>
<dbReference type="InParanoid" id="Q9LS44"/>
<dbReference type="OMA" id="ITCLAPC"/>
<dbReference type="OrthoDB" id="1045822at2759"/>
<dbReference type="PhylomeDB" id="Q9LS44"/>
<dbReference type="PRO" id="PR:Q9LS44"/>
<dbReference type="Proteomes" id="UP000006548">
    <property type="component" value="Chromosome 3"/>
</dbReference>
<dbReference type="ExpressionAtlas" id="Q9LS44">
    <property type="expression patterns" value="baseline and differential"/>
</dbReference>
<dbReference type="GO" id="GO:0016020">
    <property type="term" value="C:membrane"/>
    <property type="evidence" value="ECO:0007669"/>
    <property type="project" value="UniProtKB-SubCell"/>
</dbReference>
<dbReference type="InterPro" id="IPR006461">
    <property type="entry name" value="PLAC_motif_containing"/>
</dbReference>
<dbReference type="NCBIfam" id="TIGR01571">
    <property type="entry name" value="A_thal_Cys_rich"/>
    <property type="match status" value="1"/>
</dbReference>
<dbReference type="PANTHER" id="PTHR15907">
    <property type="entry name" value="DUF614 FAMILY PROTEIN-RELATED"/>
    <property type="match status" value="1"/>
</dbReference>
<dbReference type="Pfam" id="PF04749">
    <property type="entry name" value="PLAC8"/>
    <property type="match status" value="1"/>
</dbReference>
<organism>
    <name type="scientific">Arabidopsis thaliana</name>
    <name type="common">Mouse-ear cress</name>
    <dbReference type="NCBI Taxonomy" id="3702"/>
    <lineage>
        <taxon>Eukaryota</taxon>
        <taxon>Viridiplantae</taxon>
        <taxon>Streptophyta</taxon>
        <taxon>Embryophyta</taxon>
        <taxon>Tracheophyta</taxon>
        <taxon>Spermatophyta</taxon>
        <taxon>Magnoliopsida</taxon>
        <taxon>eudicotyledons</taxon>
        <taxon>Gunneridae</taxon>
        <taxon>Pentapetalae</taxon>
        <taxon>rosids</taxon>
        <taxon>malvids</taxon>
        <taxon>Brassicales</taxon>
        <taxon>Brassicaceae</taxon>
        <taxon>Camelineae</taxon>
        <taxon>Arabidopsis</taxon>
    </lineage>
</organism>